<name>PA2_BUNCI</name>
<sequence length="39" mass="4153">GATIMPGTLWCGKGNSAADYLQLGVWKDTAHCCRDHDGC</sequence>
<keyword id="KW-0106">Calcium</keyword>
<keyword id="KW-0903">Direct protein sequencing</keyword>
<keyword id="KW-1015">Disulfide bond</keyword>
<keyword id="KW-0378">Hydrolase</keyword>
<keyword id="KW-0442">Lipid degradation</keyword>
<keyword id="KW-0443">Lipid metabolism</keyword>
<keyword id="KW-0479">Metal-binding</keyword>
<keyword id="KW-0166">Nematocyst</keyword>
<keyword id="KW-0964">Secreted</keyword>
<keyword id="KW-0800">Toxin</keyword>
<protein>
    <recommendedName>
        <fullName evidence="7">Phospholipase A2</fullName>
        <ecNumber>3.1.1.4</ecNumber>
    </recommendedName>
    <alternativeName>
        <fullName evidence="2">Phosphatidylcholine 2-acylhydrolase</fullName>
    </alternativeName>
</protein>
<organism>
    <name type="scientific">Bunodosoma caissarum</name>
    <name type="common">Sea anemone</name>
    <dbReference type="NCBI Taxonomy" id="31165"/>
    <lineage>
        <taxon>Eukaryota</taxon>
        <taxon>Metazoa</taxon>
        <taxon>Cnidaria</taxon>
        <taxon>Anthozoa</taxon>
        <taxon>Hexacorallia</taxon>
        <taxon>Actiniaria</taxon>
        <taxon>Actiniidae</taxon>
        <taxon>Bunodosoma</taxon>
    </lineage>
</organism>
<dbReference type="EC" id="3.1.1.4"/>
<dbReference type="SMR" id="P86780"/>
<dbReference type="GO" id="GO:0005576">
    <property type="term" value="C:extracellular region"/>
    <property type="evidence" value="ECO:0000304"/>
    <property type="project" value="UniProtKB"/>
</dbReference>
<dbReference type="GO" id="GO:0042151">
    <property type="term" value="C:nematocyst"/>
    <property type="evidence" value="ECO:0007669"/>
    <property type="project" value="UniProtKB-SubCell"/>
</dbReference>
<dbReference type="GO" id="GO:0046872">
    <property type="term" value="F:metal ion binding"/>
    <property type="evidence" value="ECO:0007669"/>
    <property type="project" value="UniProtKB-KW"/>
</dbReference>
<dbReference type="GO" id="GO:0004623">
    <property type="term" value="F:phospholipase A2 activity"/>
    <property type="evidence" value="ECO:0000314"/>
    <property type="project" value="UniProtKB"/>
</dbReference>
<dbReference type="GO" id="GO:0090729">
    <property type="term" value="F:toxin activity"/>
    <property type="evidence" value="ECO:0007669"/>
    <property type="project" value="UniProtKB-KW"/>
</dbReference>
<dbReference type="GO" id="GO:0050482">
    <property type="term" value="P:arachidonate secretion"/>
    <property type="evidence" value="ECO:0007669"/>
    <property type="project" value="InterPro"/>
</dbReference>
<dbReference type="GO" id="GO:0016042">
    <property type="term" value="P:lipid catabolic process"/>
    <property type="evidence" value="ECO:0007669"/>
    <property type="project" value="UniProtKB-KW"/>
</dbReference>
<dbReference type="GO" id="GO:0006644">
    <property type="term" value="P:phospholipid metabolic process"/>
    <property type="evidence" value="ECO:0007669"/>
    <property type="project" value="InterPro"/>
</dbReference>
<dbReference type="Gene3D" id="1.20.90.10">
    <property type="entry name" value="Phospholipase A2 domain"/>
    <property type="match status" value="1"/>
</dbReference>
<dbReference type="InterPro" id="IPR016090">
    <property type="entry name" value="PLipase_A2_dom"/>
</dbReference>
<dbReference type="InterPro" id="IPR036444">
    <property type="entry name" value="PLipase_A2_dom_sf"/>
</dbReference>
<dbReference type="InterPro" id="IPR033113">
    <property type="entry name" value="PLipase_A2_His_AS"/>
</dbReference>
<dbReference type="PANTHER" id="PTHR12253">
    <property type="entry name" value="RH14732P"/>
    <property type="match status" value="1"/>
</dbReference>
<dbReference type="Pfam" id="PF05826">
    <property type="entry name" value="Phospholip_A2_2"/>
    <property type="match status" value="1"/>
</dbReference>
<dbReference type="SUPFAM" id="SSF48619">
    <property type="entry name" value="Phospholipase A2, PLA2"/>
    <property type="match status" value="1"/>
</dbReference>
<dbReference type="PROSITE" id="PS00118">
    <property type="entry name" value="PA2_HIS"/>
    <property type="match status" value="1"/>
</dbReference>
<comment type="function">
    <text evidence="6">PA2 catalyzes the calcium-dependent hydrolysis of the 2-acyl groups in 3-sn-phosphoglycerides. Induces insulin secretion in isolated rat islets under high glucose concentration conditions, but not under low glucose concentration conditions. Increases perfusion pressure, renal vascular resistance, urinary flow, glomerular filtration rate, and potassium, sodium, and chloride excretion levels in rat kidney. Does not increase perfusion pressure in the rat mesenteric vascular bed.</text>
</comment>
<comment type="catalytic activity">
    <reaction evidence="4 5 6">
        <text>a 1,2-diacyl-sn-glycero-3-phosphocholine + H2O = a 1-acyl-sn-glycero-3-phosphocholine + a fatty acid + H(+)</text>
        <dbReference type="Rhea" id="RHEA:15801"/>
        <dbReference type="ChEBI" id="CHEBI:15377"/>
        <dbReference type="ChEBI" id="CHEBI:15378"/>
        <dbReference type="ChEBI" id="CHEBI:28868"/>
        <dbReference type="ChEBI" id="CHEBI:57643"/>
        <dbReference type="ChEBI" id="CHEBI:58168"/>
        <dbReference type="EC" id="3.1.1.4"/>
    </reaction>
</comment>
<comment type="cofactor">
    <cofactor evidence="1">
        <name>Ca(2+)</name>
        <dbReference type="ChEBI" id="CHEBI:29108"/>
    </cofactor>
    <text evidence="1">Binds 1 Ca(2+) ion per subunit.</text>
</comment>
<comment type="activity regulation">
    <text evidence="6">Inhibited by morin and p-BPB.</text>
</comment>
<comment type="subcellular location">
    <subcellularLocation>
        <location evidence="6 8">Secreted</location>
    </subcellularLocation>
    <subcellularLocation>
        <location evidence="6 8">Nematocyst</location>
    </subcellularLocation>
</comment>
<comment type="tissue specificity">
    <text evidence="6">Expressed uniformly in tentacles (at protein level).</text>
</comment>
<comment type="mass spectrometry" mass="14706.0" method="MALDI" evidence="6"/>
<comment type="similarity">
    <text evidence="3">Belongs to the phospholipase A2 family.</text>
</comment>
<proteinExistence type="evidence at protein level"/>
<feature type="chain" id="PRO_0000399441" description="Phospholipase A2">
    <location>
        <begin position="1"/>
        <end position="39" status="greater than"/>
    </location>
</feature>
<feature type="active site" evidence="2 4 5">
    <location>
        <position position="36"/>
    </location>
</feature>
<feature type="binding site" evidence="1">
    <location>
        <position position="10"/>
    </location>
    <ligand>
        <name>Ca(2+)</name>
        <dbReference type="ChEBI" id="CHEBI:29108"/>
    </ligand>
</feature>
<feature type="binding site" evidence="1">
    <location>
        <position position="12"/>
    </location>
    <ligand>
        <name>Ca(2+)</name>
        <dbReference type="ChEBI" id="CHEBI:29108"/>
    </ligand>
</feature>
<feature type="binding site" evidence="1">
    <location>
        <position position="14"/>
    </location>
    <ligand>
        <name>Ca(2+)</name>
        <dbReference type="ChEBI" id="CHEBI:29108"/>
    </ligand>
</feature>
<feature type="binding site" evidence="1">
    <location>
        <position position="37"/>
    </location>
    <ligand>
        <name>Ca(2+)</name>
        <dbReference type="ChEBI" id="CHEBI:29108"/>
    </ligand>
</feature>
<feature type="disulfide bond" evidence="1">
    <location>
        <begin position="11"/>
        <end position="33"/>
    </location>
</feature>
<feature type="non-terminal residue" evidence="7">
    <location>
        <position position="39"/>
    </location>
</feature>
<accession>P86780</accession>
<reference key="1">
    <citation type="journal article" date="2009" name="Toxicon">
        <title>Purification and characterization of the biological effects of phospholipase A(2) from sea anemone Bunodosoma caissarum.</title>
        <authorList>
            <person name="Martins R.D."/>
            <person name="Alves R.S."/>
            <person name="Martins A.M."/>
            <person name="Barbosa P.S."/>
            <person name="Evangelista J.S."/>
            <person name="Evangelista J.J."/>
            <person name="Ximenes R.M."/>
            <person name="Toyama M.H."/>
            <person name="Toyama D.O."/>
            <person name="Souza A.J."/>
            <person name="Orts D.J."/>
            <person name="Marangoni S."/>
            <person name="de Menezes D.B."/>
            <person name="Fonteles M.C."/>
            <person name="Monteiro H.S."/>
        </authorList>
    </citation>
    <scope>PROTEIN SEQUENCE</scope>
    <scope>FUNCTION</scope>
    <scope>CATALYTIC ACTIVITY</scope>
    <scope>ACTIVITY REGULATION</scope>
    <scope>TISSUE SPECIFICITY</scope>
    <scope>MASS SPECTROMETRY</scope>
    <source>
        <tissue>Tentacle</tissue>
    </source>
</reference>
<evidence type="ECO:0000250" key="1">
    <source>
        <dbReference type="UniProtKB" id="P14555"/>
    </source>
</evidence>
<evidence type="ECO:0000250" key="2">
    <source>
        <dbReference type="UniProtKB" id="Q9NZ20"/>
    </source>
</evidence>
<evidence type="ECO:0000255" key="3"/>
<evidence type="ECO:0000255" key="4">
    <source>
        <dbReference type="PROSITE-ProRule" id="PRU10035"/>
    </source>
</evidence>
<evidence type="ECO:0000255" key="5">
    <source>
        <dbReference type="PROSITE-ProRule" id="PRU10036"/>
    </source>
</evidence>
<evidence type="ECO:0000269" key="6">
    <source>
    </source>
</evidence>
<evidence type="ECO:0000303" key="7">
    <source>
    </source>
</evidence>
<evidence type="ECO:0000305" key="8"/>